<keyword id="KW-0030">Aminoacyl-tRNA synthetase</keyword>
<keyword id="KW-0067">ATP-binding</keyword>
<keyword id="KW-0963">Cytoplasm</keyword>
<keyword id="KW-0436">Ligase</keyword>
<keyword id="KW-0547">Nucleotide-binding</keyword>
<keyword id="KW-0648">Protein biosynthesis</keyword>
<keyword id="KW-1185">Reference proteome</keyword>
<comment type="catalytic activity">
    <reaction evidence="1">
        <text>tRNA(Gly) + glycine + ATP = glycyl-tRNA(Gly) + AMP + diphosphate</text>
        <dbReference type="Rhea" id="RHEA:16013"/>
        <dbReference type="Rhea" id="RHEA-COMP:9664"/>
        <dbReference type="Rhea" id="RHEA-COMP:9683"/>
        <dbReference type="ChEBI" id="CHEBI:30616"/>
        <dbReference type="ChEBI" id="CHEBI:33019"/>
        <dbReference type="ChEBI" id="CHEBI:57305"/>
        <dbReference type="ChEBI" id="CHEBI:78442"/>
        <dbReference type="ChEBI" id="CHEBI:78522"/>
        <dbReference type="ChEBI" id="CHEBI:456215"/>
        <dbReference type="EC" id="6.1.1.14"/>
    </reaction>
</comment>
<comment type="subunit">
    <text evidence="1">Tetramer of two alpha and two beta subunits.</text>
</comment>
<comment type="subcellular location">
    <subcellularLocation>
        <location evidence="1">Cytoplasm</location>
    </subcellularLocation>
</comment>
<comment type="similarity">
    <text evidence="1">Belongs to the class-II aminoacyl-tRNA synthetase family.</text>
</comment>
<proteinExistence type="inferred from homology"/>
<protein>
    <recommendedName>
        <fullName evidence="1">Glycine--tRNA ligase beta subunit</fullName>
        <ecNumber evidence="1">6.1.1.14</ecNumber>
    </recommendedName>
    <alternativeName>
        <fullName evidence="1">Glycyl-tRNA synthetase beta subunit</fullName>
        <shortName evidence="1">GlyRS</shortName>
    </alternativeName>
</protein>
<name>SYGB_LEUMM</name>
<evidence type="ECO:0000255" key="1">
    <source>
        <dbReference type="HAMAP-Rule" id="MF_00255"/>
    </source>
</evidence>
<dbReference type="EC" id="6.1.1.14" evidence="1"/>
<dbReference type="EMBL" id="CP000414">
    <property type="protein sequence ID" value="ABJ62291.1"/>
    <property type="molecule type" value="Genomic_DNA"/>
</dbReference>
<dbReference type="RefSeq" id="WP_011679923.1">
    <property type="nucleotide sequence ID" value="NC_008531.1"/>
</dbReference>
<dbReference type="SMR" id="Q03WY1"/>
<dbReference type="EnsemblBacteria" id="ABJ62291">
    <property type="protein sequence ID" value="ABJ62291"/>
    <property type="gene ID" value="LEUM_1193"/>
</dbReference>
<dbReference type="GeneID" id="29576056"/>
<dbReference type="KEGG" id="lme:LEUM_1193"/>
<dbReference type="eggNOG" id="COG0751">
    <property type="taxonomic scope" value="Bacteria"/>
</dbReference>
<dbReference type="HOGENOM" id="CLU_007220_2_2_9"/>
<dbReference type="Proteomes" id="UP000000362">
    <property type="component" value="Chromosome"/>
</dbReference>
<dbReference type="GO" id="GO:0005829">
    <property type="term" value="C:cytosol"/>
    <property type="evidence" value="ECO:0007669"/>
    <property type="project" value="TreeGrafter"/>
</dbReference>
<dbReference type="GO" id="GO:0005524">
    <property type="term" value="F:ATP binding"/>
    <property type="evidence" value="ECO:0007669"/>
    <property type="project" value="UniProtKB-UniRule"/>
</dbReference>
<dbReference type="GO" id="GO:0004820">
    <property type="term" value="F:glycine-tRNA ligase activity"/>
    <property type="evidence" value="ECO:0007669"/>
    <property type="project" value="UniProtKB-UniRule"/>
</dbReference>
<dbReference type="GO" id="GO:0006426">
    <property type="term" value="P:glycyl-tRNA aminoacylation"/>
    <property type="evidence" value="ECO:0007669"/>
    <property type="project" value="UniProtKB-UniRule"/>
</dbReference>
<dbReference type="HAMAP" id="MF_00255">
    <property type="entry name" value="Gly_tRNA_synth_beta"/>
    <property type="match status" value="1"/>
</dbReference>
<dbReference type="InterPro" id="IPR015944">
    <property type="entry name" value="Gly-tRNA-synth_bsu"/>
</dbReference>
<dbReference type="InterPro" id="IPR006194">
    <property type="entry name" value="Gly-tRNA-synth_heterodimer"/>
</dbReference>
<dbReference type="NCBIfam" id="TIGR00211">
    <property type="entry name" value="glyS"/>
    <property type="match status" value="1"/>
</dbReference>
<dbReference type="PANTHER" id="PTHR30075:SF2">
    <property type="entry name" value="GLYCINE--TRNA LIGASE, CHLOROPLASTIC_MITOCHONDRIAL 2"/>
    <property type="match status" value="1"/>
</dbReference>
<dbReference type="PANTHER" id="PTHR30075">
    <property type="entry name" value="GLYCYL-TRNA SYNTHETASE"/>
    <property type="match status" value="1"/>
</dbReference>
<dbReference type="Pfam" id="PF02092">
    <property type="entry name" value="tRNA_synt_2f"/>
    <property type="match status" value="1"/>
</dbReference>
<dbReference type="PRINTS" id="PR01045">
    <property type="entry name" value="TRNASYNTHGB"/>
</dbReference>
<dbReference type="SUPFAM" id="SSF109604">
    <property type="entry name" value="HD-domain/PDEase-like"/>
    <property type="match status" value="1"/>
</dbReference>
<dbReference type="PROSITE" id="PS50861">
    <property type="entry name" value="AA_TRNA_LIGASE_II_GLYAB"/>
    <property type="match status" value="1"/>
</dbReference>
<gene>
    <name evidence="1" type="primary">glyS</name>
    <name type="ordered locus">LEUM_1193</name>
</gene>
<accession>Q03WY1</accession>
<reference key="1">
    <citation type="journal article" date="2006" name="Proc. Natl. Acad. Sci. U.S.A.">
        <title>Comparative genomics of the lactic acid bacteria.</title>
        <authorList>
            <person name="Makarova K.S."/>
            <person name="Slesarev A."/>
            <person name="Wolf Y.I."/>
            <person name="Sorokin A."/>
            <person name="Mirkin B."/>
            <person name="Koonin E.V."/>
            <person name="Pavlov A."/>
            <person name="Pavlova N."/>
            <person name="Karamychev V."/>
            <person name="Polouchine N."/>
            <person name="Shakhova V."/>
            <person name="Grigoriev I."/>
            <person name="Lou Y."/>
            <person name="Rohksar D."/>
            <person name="Lucas S."/>
            <person name="Huang K."/>
            <person name="Goodstein D.M."/>
            <person name="Hawkins T."/>
            <person name="Plengvidhya V."/>
            <person name="Welker D."/>
            <person name="Hughes J."/>
            <person name="Goh Y."/>
            <person name="Benson A."/>
            <person name="Baldwin K."/>
            <person name="Lee J.-H."/>
            <person name="Diaz-Muniz I."/>
            <person name="Dosti B."/>
            <person name="Smeianov V."/>
            <person name="Wechter W."/>
            <person name="Barabote R."/>
            <person name="Lorca G."/>
            <person name="Altermann E."/>
            <person name="Barrangou R."/>
            <person name="Ganesan B."/>
            <person name="Xie Y."/>
            <person name="Rawsthorne H."/>
            <person name="Tamir D."/>
            <person name="Parker C."/>
            <person name="Breidt F."/>
            <person name="Broadbent J.R."/>
            <person name="Hutkins R."/>
            <person name="O'Sullivan D."/>
            <person name="Steele J."/>
            <person name="Unlu G."/>
            <person name="Saier M.H. Jr."/>
            <person name="Klaenhammer T."/>
            <person name="Richardson P."/>
            <person name="Kozyavkin S."/>
            <person name="Weimer B.C."/>
            <person name="Mills D.A."/>
        </authorList>
    </citation>
    <scope>NUCLEOTIDE SEQUENCE [LARGE SCALE GENOMIC DNA]</scope>
    <source>
        <strain>ATCC 8293 / DSM 20343 / BCRC 11652 / CCM 1803 / JCM 6124 / NCDO 523 / NBRC 100496 / NCIMB 8023 / NCTC 12954 / NRRL B-1118 / 37Y</strain>
    </source>
</reference>
<organism>
    <name type="scientific">Leuconostoc mesenteroides subsp. mesenteroides (strain ATCC 8293 / DSM 20343 / BCRC 11652 / CCM 1803 / JCM 6124 / NCDO 523 / NBRC 100496 / NCIMB 8023 / NCTC 12954 / NRRL B-1118 / 37Y)</name>
    <dbReference type="NCBI Taxonomy" id="203120"/>
    <lineage>
        <taxon>Bacteria</taxon>
        <taxon>Bacillati</taxon>
        <taxon>Bacillota</taxon>
        <taxon>Bacilli</taxon>
        <taxon>Lactobacillales</taxon>
        <taxon>Lactobacillaceae</taxon>
        <taxon>Leuconostoc</taxon>
    </lineage>
</organism>
<feature type="chain" id="PRO_1000101298" description="Glycine--tRNA ligase beta subunit">
    <location>
        <begin position="1"/>
        <end position="685"/>
    </location>
</feature>
<sequence length="685" mass="76562">MSTFLLEIGLEEVPAHLVTSSENQLIERTRNFLAEHRLTVGAINPYSTPRRLAVELTDVAEKSESLSEEKRGPSIERAKDANGEWTKAAMGFARGQGATPDDFETRDGYVWLTKHTEGVPAKDILVKIGAEVVSEMKFSTYMKWANNAFLYVRPIRWLVALFDKEVVDFHVLDVQTGRVTRGHRFLSNEHVEISSADDYVSKLESASVVVNAEVRKNAIRSQLTAIAKQNNWSLELDTDAAQNLLEEVNNIVEWPTAFAGTFDKKYLEIPDEVLITSMREHQRFFFVTNHDGKLLPHFLSVRNGNKEHLDNVIAGNEKVLVARLEDAEFFYKEDQTKTIADYMEKVKKLVFHEKIGTVYEHMQRTGVLAQALAQSLNFDEQQLSNVSRAAEIYKFDLMTGMVGEFDELQGIMGEHYAKLFGENPAVAAAIKEHYMPTSATGKIAESDIGAVLAVADKLDAIVTFFAADLTPSGSNDPYGLRRAATGIVRTLQEKNWHIALKPVLTQFAQSQGEVAAADITAVLEFILDRVRKLTLDDGVRQDLVSAGVSRSGNTDVVYLIDRINVLAAHSKDNDFRDVIESLTRVDRLAVKQLTNDSVDPSLFENDAEKELYQATYALNLSHLVKEGADEVYTTLAGLQSPISTYFEATMVNTENAAVKNNRYAQLNVIHRLISELGDLEQIVIK</sequence>